<name>SYDND_BORBZ</name>
<keyword id="KW-0030">Aminoacyl-tRNA synthetase</keyword>
<keyword id="KW-0067">ATP-binding</keyword>
<keyword id="KW-0963">Cytoplasm</keyword>
<keyword id="KW-0436">Ligase</keyword>
<keyword id="KW-0547">Nucleotide-binding</keyword>
<keyword id="KW-0648">Protein biosynthesis</keyword>
<gene>
    <name evidence="1" type="primary">aspS</name>
    <name type="ordered locus">BbuZS7_0453</name>
</gene>
<feature type="chain" id="PRO_1000198963" description="Aspartate--tRNA(Asp/Asn) ligase">
    <location>
        <begin position="1"/>
        <end position="586"/>
    </location>
</feature>
<feature type="region of interest" description="Aspartate" evidence="1">
    <location>
        <begin position="196"/>
        <end position="199"/>
    </location>
</feature>
<feature type="binding site" evidence="1">
    <location>
        <position position="172"/>
    </location>
    <ligand>
        <name>L-aspartate</name>
        <dbReference type="ChEBI" id="CHEBI:29991"/>
    </ligand>
</feature>
<feature type="binding site" evidence="1">
    <location>
        <begin position="218"/>
        <end position="220"/>
    </location>
    <ligand>
        <name>ATP</name>
        <dbReference type="ChEBI" id="CHEBI:30616"/>
    </ligand>
</feature>
<feature type="binding site" evidence="1">
    <location>
        <position position="218"/>
    </location>
    <ligand>
        <name>L-aspartate</name>
        <dbReference type="ChEBI" id="CHEBI:29991"/>
    </ligand>
</feature>
<feature type="binding site" evidence="1">
    <location>
        <position position="227"/>
    </location>
    <ligand>
        <name>ATP</name>
        <dbReference type="ChEBI" id="CHEBI:30616"/>
    </ligand>
</feature>
<feature type="binding site" evidence="1">
    <location>
        <position position="446"/>
    </location>
    <ligand>
        <name>L-aspartate</name>
        <dbReference type="ChEBI" id="CHEBI:29991"/>
    </ligand>
</feature>
<feature type="binding site" evidence="1">
    <location>
        <position position="480"/>
    </location>
    <ligand>
        <name>ATP</name>
        <dbReference type="ChEBI" id="CHEBI:30616"/>
    </ligand>
</feature>
<feature type="binding site" evidence="1">
    <location>
        <position position="487"/>
    </location>
    <ligand>
        <name>L-aspartate</name>
        <dbReference type="ChEBI" id="CHEBI:29991"/>
    </ligand>
</feature>
<feature type="binding site" evidence="1">
    <location>
        <begin position="532"/>
        <end position="535"/>
    </location>
    <ligand>
        <name>ATP</name>
        <dbReference type="ChEBI" id="CHEBI:30616"/>
    </ligand>
</feature>
<feature type="site" description="Important for tRNA non-discrimination" evidence="1">
    <location>
        <position position="31"/>
    </location>
</feature>
<protein>
    <recommendedName>
        <fullName evidence="1">Aspartate--tRNA(Asp/Asn) ligase</fullName>
        <ecNumber evidence="1">6.1.1.23</ecNumber>
    </recommendedName>
    <alternativeName>
        <fullName evidence="1">Aspartyl-tRNA synthetase</fullName>
        <shortName evidence="1">AspRS</shortName>
    </alternativeName>
    <alternativeName>
        <fullName evidence="1">Non-discriminating aspartyl-tRNA synthetase</fullName>
        <shortName evidence="1">ND-AspRS</shortName>
    </alternativeName>
</protein>
<sequence>MFKVIKCNELNEKLIDKKVEINAWVKKIRHHGKFIFLNIRDRYEKAQVLVNEEKLLKIAEKIKLEYCIKIQGLLIKRPPNMINANMKTGHFEILAKNIEIISKCNELPFMIEDDNNASENSKLEYRYLDLRRDSLKNKIILRCQATHLIRNFLIKRKFLELETPTFVKSTPEGARDFVIPSRIHKGSFYALPQSPQLYKQLIMIAGFDKYFQIARCYRDEDSRGDRQPEFTQLDLEMSFVKKENIFKLIENMLFLIFKNCININLPKKFKKITYKKAMNKYGSDKPDTRFELELQDISRNLKNSEFNIFKDTLKNKGSIKILIVKDKADKFSRAKINNLEEIAKLYKTQGLYFTKIENNKFSGGIAKFLKTEEQELIKTYSLENNDIIFFTANNNWETACKAMGQIRIKIANDLGLIDENKFEFLWVYDFPLFEYDENTKTYSPAHHMFSLPKKQYIANLEKNPKKTIGEIYDLVLNGVELGSGSIRIHNKELQQRIFKIIGFQKEKSEDRFGFFLKALEYGAPNHGGIAIGIDRLIMLMTKSTSIKDVILFPKNSFAASPLDNSPSKISNEQLKELGINIVDGDN</sequence>
<evidence type="ECO:0000255" key="1">
    <source>
        <dbReference type="HAMAP-Rule" id="MF_00044"/>
    </source>
</evidence>
<reference key="1">
    <citation type="journal article" date="2011" name="J. Bacteriol.">
        <title>Whole-genome sequences of thirteen isolates of Borrelia burgdorferi.</title>
        <authorList>
            <person name="Schutzer S.E."/>
            <person name="Fraser-Liggett C.M."/>
            <person name="Casjens S.R."/>
            <person name="Qiu W.G."/>
            <person name="Dunn J.J."/>
            <person name="Mongodin E.F."/>
            <person name="Luft B.J."/>
        </authorList>
    </citation>
    <scope>NUCLEOTIDE SEQUENCE [LARGE SCALE GENOMIC DNA]</scope>
    <source>
        <strain>ZS7</strain>
    </source>
</reference>
<organism>
    <name type="scientific">Borreliella burgdorferi (strain ZS7)</name>
    <name type="common">Borrelia burgdorferi</name>
    <dbReference type="NCBI Taxonomy" id="445985"/>
    <lineage>
        <taxon>Bacteria</taxon>
        <taxon>Pseudomonadati</taxon>
        <taxon>Spirochaetota</taxon>
        <taxon>Spirochaetia</taxon>
        <taxon>Spirochaetales</taxon>
        <taxon>Borreliaceae</taxon>
        <taxon>Borreliella</taxon>
    </lineage>
</organism>
<dbReference type="EC" id="6.1.1.23" evidence="1"/>
<dbReference type="EMBL" id="CP001205">
    <property type="protein sequence ID" value="ACK74755.1"/>
    <property type="molecule type" value="Genomic_DNA"/>
</dbReference>
<dbReference type="RefSeq" id="WP_002657924.1">
    <property type="nucleotide sequence ID" value="NC_011728.1"/>
</dbReference>
<dbReference type="SMR" id="B7J213"/>
<dbReference type="GeneID" id="56567878"/>
<dbReference type="KEGG" id="bbz:BbuZS7_0453"/>
<dbReference type="HOGENOM" id="CLU_014330_3_2_12"/>
<dbReference type="Proteomes" id="UP000006901">
    <property type="component" value="Chromosome"/>
</dbReference>
<dbReference type="GO" id="GO:0005737">
    <property type="term" value="C:cytoplasm"/>
    <property type="evidence" value="ECO:0007669"/>
    <property type="project" value="UniProtKB-SubCell"/>
</dbReference>
<dbReference type="GO" id="GO:0004815">
    <property type="term" value="F:aspartate-tRNA ligase activity"/>
    <property type="evidence" value="ECO:0007669"/>
    <property type="project" value="UniProtKB-UniRule"/>
</dbReference>
<dbReference type="GO" id="GO:0050560">
    <property type="term" value="F:aspartate-tRNA(Asn) ligase activity"/>
    <property type="evidence" value="ECO:0007669"/>
    <property type="project" value="UniProtKB-EC"/>
</dbReference>
<dbReference type="GO" id="GO:0005524">
    <property type="term" value="F:ATP binding"/>
    <property type="evidence" value="ECO:0007669"/>
    <property type="project" value="UniProtKB-UniRule"/>
</dbReference>
<dbReference type="GO" id="GO:0003676">
    <property type="term" value="F:nucleic acid binding"/>
    <property type="evidence" value="ECO:0007669"/>
    <property type="project" value="InterPro"/>
</dbReference>
<dbReference type="GO" id="GO:0006422">
    <property type="term" value="P:aspartyl-tRNA aminoacylation"/>
    <property type="evidence" value="ECO:0007669"/>
    <property type="project" value="UniProtKB-UniRule"/>
</dbReference>
<dbReference type="CDD" id="cd00777">
    <property type="entry name" value="AspRS_core"/>
    <property type="match status" value="1"/>
</dbReference>
<dbReference type="CDD" id="cd04317">
    <property type="entry name" value="EcAspRS_like_N"/>
    <property type="match status" value="1"/>
</dbReference>
<dbReference type="Gene3D" id="3.30.930.10">
    <property type="entry name" value="Bira Bifunctional Protein, Domain 2"/>
    <property type="match status" value="1"/>
</dbReference>
<dbReference type="Gene3D" id="3.30.1360.30">
    <property type="entry name" value="GAD-like domain"/>
    <property type="match status" value="1"/>
</dbReference>
<dbReference type="Gene3D" id="2.40.50.140">
    <property type="entry name" value="Nucleic acid-binding proteins"/>
    <property type="match status" value="1"/>
</dbReference>
<dbReference type="HAMAP" id="MF_00044">
    <property type="entry name" value="Asp_tRNA_synth_type1"/>
    <property type="match status" value="1"/>
</dbReference>
<dbReference type="InterPro" id="IPR004364">
    <property type="entry name" value="Aa-tRNA-synt_II"/>
</dbReference>
<dbReference type="InterPro" id="IPR006195">
    <property type="entry name" value="aa-tRNA-synth_II"/>
</dbReference>
<dbReference type="InterPro" id="IPR045864">
    <property type="entry name" value="aa-tRNA-synth_II/BPL/LPL"/>
</dbReference>
<dbReference type="InterPro" id="IPR004524">
    <property type="entry name" value="Asp-tRNA-ligase_1"/>
</dbReference>
<dbReference type="InterPro" id="IPR047089">
    <property type="entry name" value="Asp-tRNA-ligase_1_N"/>
</dbReference>
<dbReference type="InterPro" id="IPR002312">
    <property type="entry name" value="Asp/Asn-tRNA-synth_IIb"/>
</dbReference>
<dbReference type="InterPro" id="IPR047090">
    <property type="entry name" value="AspRS_core"/>
</dbReference>
<dbReference type="InterPro" id="IPR004115">
    <property type="entry name" value="GAD-like_sf"/>
</dbReference>
<dbReference type="InterPro" id="IPR029351">
    <property type="entry name" value="GAD_dom"/>
</dbReference>
<dbReference type="InterPro" id="IPR012340">
    <property type="entry name" value="NA-bd_OB-fold"/>
</dbReference>
<dbReference type="InterPro" id="IPR004365">
    <property type="entry name" value="NA-bd_OB_tRNA"/>
</dbReference>
<dbReference type="NCBIfam" id="TIGR00459">
    <property type="entry name" value="aspS_bact"/>
    <property type="match status" value="1"/>
</dbReference>
<dbReference type="NCBIfam" id="NF001750">
    <property type="entry name" value="PRK00476.1"/>
    <property type="match status" value="1"/>
</dbReference>
<dbReference type="PANTHER" id="PTHR22594:SF5">
    <property type="entry name" value="ASPARTATE--TRNA LIGASE, MITOCHONDRIAL"/>
    <property type="match status" value="1"/>
</dbReference>
<dbReference type="PANTHER" id="PTHR22594">
    <property type="entry name" value="ASPARTYL/LYSYL-TRNA SYNTHETASE"/>
    <property type="match status" value="1"/>
</dbReference>
<dbReference type="Pfam" id="PF02938">
    <property type="entry name" value="GAD"/>
    <property type="match status" value="1"/>
</dbReference>
<dbReference type="Pfam" id="PF00152">
    <property type="entry name" value="tRNA-synt_2"/>
    <property type="match status" value="1"/>
</dbReference>
<dbReference type="Pfam" id="PF01336">
    <property type="entry name" value="tRNA_anti-codon"/>
    <property type="match status" value="1"/>
</dbReference>
<dbReference type="PRINTS" id="PR01042">
    <property type="entry name" value="TRNASYNTHASP"/>
</dbReference>
<dbReference type="SUPFAM" id="SSF55681">
    <property type="entry name" value="Class II aaRS and biotin synthetases"/>
    <property type="match status" value="1"/>
</dbReference>
<dbReference type="SUPFAM" id="SSF55261">
    <property type="entry name" value="GAD domain-like"/>
    <property type="match status" value="1"/>
</dbReference>
<dbReference type="SUPFAM" id="SSF50249">
    <property type="entry name" value="Nucleic acid-binding proteins"/>
    <property type="match status" value="1"/>
</dbReference>
<dbReference type="PROSITE" id="PS50862">
    <property type="entry name" value="AA_TRNA_LIGASE_II"/>
    <property type="match status" value="1"/>
</dbReference>
<proteinExistence type="inferred from homology"/>
<accession>B7J213</accession>
<comment type="function">
    <text evidence="1">Aspartyl-tRNA synthetase with relaxed tRNA specificity since it is able to aspartylate not only its cognate tRNA(Asp) but also tRNA(Asn). Reaction proceeds in two steps: L-aspartate is first activated by ATP to form Asp-AMP and then transferred to the acceptor end of tRNA(Asp/Asn).</text>
</comment>
<comment type="catalytic activity">
    <reaction evidence="1">
        <text>tRNA(Asx) + L-aspartate + ATP = L-aspartyl-tRNA(Asx) + AMP + diphosphate</text>
        <dbReference type="Rhea" id="RHEA:18349"/>
        <dbReference type="Rhea" id="RHEA-COMP:9710"/>
        <dbReference type="Rhea" id="RHEA-COMP:9711"/>
        <dbReference type="ChEBI" id="CHEBI:29991"/>
        <dbReference type="ChEBI" id="CHEBI:30616"/>
        <dbReference type="ChEBI" id="CHEBI:33019"/>
        <dbReference type="ChEBI" id="CHEBI:78442"/>
        <dbReference type="ChEBI" id="CHEBI:78516"/>
        <dbReference type="ChEBI" id="CHEBI:456215"/>
        <dbReference type="EC" id="6.1.1.23"/>
    </reaction>
</comment>
<comment type="subunit">
    <text evidence="1">Homodimer.</text>
</comment>
<comment type="subcellular location">
    <subcellularLocation>
        <location evidence="1">Cytoplasm</location>
    </subcellularLocation>
</comment>
<comment type="similarity">
    <text evidence="1">Belongs to the class-II aminoacyl-tRNA synthetase family. Type 1 subfamily.</text>
</comment>